<comment type="function">
    <text evidence="1">Involved in the synthesis of autoinducer 2 (AI-2) which is secreted by bacteria and is used to communicate both the cell density and the metabolic potential of the environment. The regulation of gene expression in response to changes in cell density is called quorum sensing. Catalyzes the transformation of S-ribosylhomocysteine (RHC) to homocysteine (HC) and 4,5-dihydroxy-2,3-pentadione (DPD).</text>
</comment>
<comment type="catalytic activity">
    <reaction evidence="1">
        <text>S-(5-deoxy-D-ribos-5-yl)-L-homocysteine = (S)-4,5-dihydroxypentane-2,3-dione + L-homocysteine</text>
        <dbReference type="Rhea" id="RHEA:17753"/>
        <dbReference type="ChEBI" id="CHEBI:29484"/>
        <dbReference type="ChEBI" id="CHEBI:58195"/>
        <dbReference type="ChEBI" id="CHEBI:58199"/>
        <dbReference type="EC" id="4.4.1.21"/>
    </reaction>
</comment>
<comment type="cofactor">
    <cofactor evidence="1">
        <name>Fe cation</name>
        <dbReference type="ChEBI" id="CHEBI:24875"/>
    </cofactor>
    <text evidence="1">Binds 1 Fe cation per subunit.</text>
</comment>
<comment type="subunit">
    <text evidence="1">Homodimer.</text>
</comment>
<comment type="similarity">
    <text evidence="1">Belongs to the LuxS family.</text>
</comment>
<name>LUXS_PEDPA</name>
<reference key="1">
    <citation type="journal article" date="2006" name="Proc. Natl. Acad. Sci. U.S.A.">
        <title>Comparative genomics of the lactic acid bacteria.</title>
        <authorList>
            <person name="Makarova K.S."/>
            <person name="Slesarev A."/>
            <person name="Wolf Y.I."/>
            <person name="Sorokin A."/>
            <person name="Mirkin B."/>
            <person name="Koonin E.V."/>
            <person name="Pavlov A."/>
            <person name="Pavlova N."/>
            <person name="Karamychev V."/>
            <person name="Polouchine N."/>
            <person name="Shakhova V."/>
            <person name="Grigoriev I."/>
            <person name="Lou Y."/>
            <person name="Rohksar D."/>
            <person name="Lucas S."/>
            <person name="Huang K."/>
            <person name="Goodstein D.M."/>
            <person name="Hawkins T."/>
            <person name="Plengvidhya V."/>
            <person name="Welker D."/>
            <person name="Hughes J."/>
            <person name="Goh Y."/>
            <person name="Benson A."/>
            <person name="Baldwin K."/>
            <person name="Lee J.-H."/>
            <person name="Diaz-Muniz I."/>
            <person name="Dosti B."/>
            <person name="Smeianov V."/>
            <person name="Wechter W."/>
            <person name="Barabote R."/>
            <person name="Lorca G."/>
            <person name="Altermann E."/>
            <person name="Barrangou R."/>
            <person name="Ganesan B."/>
            <person name="Xie Y."/>
            <person name="Rawsthorne H."/>
            <person name="Tamir D."/>
            <person name="Parker C."/>
            <person name="Breidt F."/>
            <person name="Broadbent J.R."/>
            <person name="Hutkins R."/>
            <person name="O'Sullivan D."/>
            <person name="Steele J."/>
            <person name="Unlu G."/>
            <person name="Saier M.H. Jr."/>
            <person name="Klaenhammer T."/>
            <person name="Richardson P."/>
            <person name="Kozyavkin S."/>
            <person name="Weimer B.C."/>
            <person name="Mills D.A."/>
        </authorList>
    </citation>
    <scope>NUCLEOTIDE SEQUENCE [LARGE SCALE GENOMIC DNA]</scope>
    <source>
        <strain>ATCC 25745 / CCUG 21536 / LMG 10740 / 183-1w</strain>
    </source>
</reference>
<feature type="chain" id="PRO_0000298018" description="S-ribosylhomocysteine lyase">
    <location>
        <begin position="1"/>
        <end position="157"/>
    </location>
</feature>
<feature type="binding site" evidence="1">
    <location>
        <position position="54"/>
    </location>
    <ligand>
        <name>Fe cation</name>
        <dbReference type="ChEBI" id="CHEBI:24875"/>
    </ligand>
</feature>
<feature type="binding site" evidence="1">
    <location>
        <position position="58"/>
    </location>
    <ligand>
        <name>Fe cation</name>
        <dbReference type="ChEBI" id="CHEBI:24875"/>
    </ligand>
</feature>
<feature type="binding site" evidence="1">
    <location>
        <position position="124"/>
    </location>
    <ligand>
        <name>Fe cation</name>
        <dbReference type="ChEBI" id="CHEBI:24875"/>
    </ligand>
</feature>
<gene>
    <name evidence="1" type="primary">luxS</name>
    <name type="ordered locus">PEPE_1638</name>
</gene>
<protein>
    <recommendedName>
        <fullName evidence="1">S-ribosylhomocysteine lyase</fullName>
        <ecNumber evidence="1">4.4.1.21</ecNumber>
    </recommendedName>
    <alternativeName>
        <fullName evidence="1">AI-2 synthesis protein</fullName>
    </alternativeName>
    <alternativeName>
        <fullName evidence="1">Autoinducer-2 production protein LuxS</fullName>
    </alternativeName>
</protein>
<dbReference type="EC" id="4.4.1.21" evidence="1"/>
<dbReference type="EMBL" id="CP000422">
    <property type="protein sequence ID" value="ABJ68659.1"/>
    <property type="molecule type" value="Genomic_DNA"/>
</dbReference>
<dbReference type="RefSeq" id="WP_002832935.1">
    <property type="nucleotide sequence ID" value="NC_008525.1"/>
</dbReference>
<dbReference type="SMR" id="Q03DR3"/>
<dbReference type="STRING" id="278197.PEPE_1638"/>
<dbReference type="GeneID" id="33061861"/>
<dbReference type="KEGG" id="ppe:PEPE_1638"/>
<dbReference type="eggNOG" id="COG1854">
    <property type="taxonomic scope" value="Bacteria"/>
</dbReference>
<dbReference type="HOGENOM" id="CLU_107531_2_1_9"/>
<dbReference type="OrthoDB" id="9788129at2"/>
<dbReference type="Proteomes" id="UP000000773">
    <property type="component" value="Chromosome"/>
</dbReference>
<dbReference type="GO" id="GO:0005506">
    <property type="term" value="F:iron ion binding"/>
    <property type="evidence" value="ECO:0007669"/>
    <property type="project" value="InterPro"/>
</dbReference>
<dbReference type="GO" id="GO:0043768">
    <property type="term" value="F:S-ribosylhomocysteine lyase activity"/>
    <property type="evidence" value="ECO:0007669"/>
    <property type="project" value="UniProtKB-UniRule"/>
</dbReference>
<dbReference type="GO" id="GO:0009372">
    <property type="term" value="P:quorum sensing"/>
    <property type="evidence" value="ECO:0007669"/>
    <property type="project" value="UniProtKB-UniRule"/>
</dbReference>
<dbReference type="Gene3D" id="3.30.1360.80">
    <property type="entry name" value="S-ribosylhomocysteinase (LuxS)"/>
    <property type="match status" value="1"/>
</dbReference>
<dbReference type="HAMAP" id="MF_00091">
    <property type="entry name" value="LuxS"/>
    <property type="match status" value="1"/>
</dbReference>
<dbReference type="InterPro" id="IPR037005">
    <property type="entry name" value="LuxS_sf"/>
</dbReference>
<dbReference type="InterPro" id="IPR011249">
    <property type="entry name" value="Metalloenz_LuxS/M16"/>
</dbReference>
<dbReference type="InterPro" id="IPR003815">
    <property type="entry name" value="S-ribosylhomocysteinase"/>
</dbReference>
<dbReference type="NCBIfam" id="NF002606">
    <property type="entry name" value="PRK02260.2-4"/>
    <property type="match status" value="1"/>
</dbReference>
<dbReference type="NCBIfam" id="NF002608">
    <property type="entry name" value="PRK02260.3-1"/>
    <property type="match status" value="1"/>
</dbReference>
<dbReference type="PANTHER" id="PTHR35799">
    <property type="entry name" value="S-RIBOSYLHOMOCYSTEINE LYASE"/>
    <property type="match status" value="1"/>
</dbReference>
<dbReference type="PANTHER" id="PTHR35799:SF1">
    <property type="entry name" value="S-RIBOSYLHOMOCYSTEINE LYASE"/>
    <property type="match status" value="1"/>
</dbReference>
<dbReference type="Pfam" id="PF02664">
    <property type="entry name" value="LuxS"/>
    <property type="match status" value="1"/>
</dbReference>
<dbReference type="PIRSF" id="PIRSF006160">
    <property type="entry name" value="AI2"/>
    <property type="match status" value="1"/>
</dbReference>
<dbReference type="PRINTS" id="PR01487">
    <property type="entry name" value="LUXSPROTEIN"/>
</dbReference>
<dbReference type="SUPFAM" id="SSF63411">
    <property type="entry name" value="LuxS/MPP-like metallohydrolase"/>
    <property type="match status" value="1"/>
</dbReference>
<keyword id="KW-0071">Autoinducer synthesis</keyword>
<keyword id="KW-0408">Iron</keyword>
<keyword id="KW-0456">Lyase</keyword>
<keyword id="KW-0479">Metal-binding</keyword>
<keyword id="KW-0673">Quorum sensing</keyword>
<accession>Q03DR3</accession>
<organism>
    <name type="scientific">Pediococcus pentosaceus (strain ATCC 25745 / CCUG 21536 / LMG 10740 / 183-1w)</name>
    <dbReference type="NCBI Taxonomy" id="278197"/>
    <lineage>
        <taxon>Bacteria</taxon>
        <taxon>Bacillati</taxon>
        <taxon>Bacillota</taxon>
        <taxon>Bacilli</taxon>
        <taxon>Lactobacillales</taxon>
        <taxon>Lactobacillaceae</taxon>
        <taxon>Pediococcus</taxon>
    </lineage>
</organism>
<sequence>MAKVESFELDHTKVKAPYVRLITVETGNKGDKISNFDLRLVQPNENAIPTAGLHTIEHLLAGLLRDRMDGIIDCSPFGCRTGFHLIAWGEPTTTEVAKALKGALEEIANVTKWEDVPGTDIYSCGNYRDHSLFSAKEWAKKILDDGISDQPFERNVI</sequence>
<evidence type="ECO:0000255" key="1">
    <source>
        <dbReference type="HAMAP-Rule" id="MF_00091"/>
    </source>
</evidence>
<proteinExistence type="inferred from homology"/>